<name>ERPA_FRATM</name>
<gene>
    <name evidence="1" type="primary">erpA</name>
    <name type="ordered locus">FTM_1384</name>
</gene>
<dbReference type="EMBL" id="CP000915">
    <property type="protein sequence ID" value="ACD31220.1"/>
    <property type="molecule type" value="Genomic_DNA"/>
</dbReference>
<dbReference type="SMR" id="B2SDK6"/>
<dbReference type="KEGG" id="ftm:FTM_1384"/>
<dbReference type="HOGENOM" id="CLU_069054_5_3_6"/>
<dbReference type="GO" id="GO:0051537">
    <property type="term" value="F:2 iron, 2 sulfur cluster binding"/>
    <property type="evidence" value="ECO:0007669"/>
    <property type="project" value="TreeGrafter"/>
</dbReference>
<dbReference type="GO" id="GO:0051539">
    <property type="term" value="F:4 iron, 4 sulfur cluster binding"/>
    <property type="evidence" value="ECO:0007669"/>
    <property type="project" value="TreeGrafter"/>
</dbReference>
<dbReference type="GO" id="GO:0005506">
    <property type="term" value="F:iron ion binding"/>
    <property type="evidence" value="ECO:0007669"/>
    <property type="project" value="UniProtKB-UniRule"/>
</dbReference>
<dbReference type="GO" id="GO:0016226">
    <property type="term" value="P:iron-sulfur cluster assembly"/>
    <property type="evidence" value="ECO:0007669"/>
    <property type="project" value="UniProtKB-UniRule"/>
</dbReference>
<dbReference type="FunFam" id="2.60.300.12:FF:000002">
    <property type="entry name" value="Iron-sulfur cluster insertion protein ErpA"/>
    <property type="match status" value="1"/>
</dbReference>
<dbReference type="Gene3D" id="2.60.300.12">
    <property type="entry name" value="HesB-like domain"/>
    <property type="match status" value="1"/>
</dbReference>
<dbReference type="HAMAP" id="MF_01380">
    <property type="entry name" value="Fe_S_insert_ErpA"/>
    <property type="match status" value="1"/>
</dbReference>
<dbReference type="InterPro" id="IPR000361">
    <property type="entry name" value="FeS_biogenesis"/>
</dbReference>
<dbReference type="InterPro" id="IPR016092">
    <property type="entry name" value="FeS_cluster_insertion"/>
</dbReference>
<dbReference type="InterPro" id="IPR017870">
    <property type="entry name" value="FeS_cluster_insertion_CS"/>
</dbReference>
<dbReference type="InterPro" id="IPR023063">
    <property type="entry name" value="FeS_cluster_insertion_RrpA"/>
</dbReference>
<dbReference type="InterPro" id="IPR035903">
    <property type="entry name" value="HesB-like_dom_sf"/>
</dbReference>
<dbReference type="NCBIfam" id="TIGR00049">
    <property type="entry name" value="iron-sulfur cluster assembly accessory protein"/>
    <property type="match status" value="1"/>
</dbReference>
<dbReference type="NCBIfam" id="NF010147">
    <property type="entry name" value="PRK13623.1"/>
    <property type="match status" value="1"/>
</dbReference>
<dbReference type="PANTHER" id="PTHR43011">
    <property type="entry name" value="IRON-SULFUR CLUSTER ASSEMBLY 2 HOMOLOG, MITOCHONDRIAL"/>
    <property type="match status" value="1"/>
</dbReference>
<dbReference type="PANTHER" id="PTHR43011:SF1">
    <property type="entry name" value="IRON-SULFUR CLUSTER ASSEMBLY 2 HOMOLOG, MITOCHONDRIAL"/>
    <property type="match status" value="1"/>
</dbReference>
<dbReference type="Pfam" id="PF01521">
    <property type="entry name" value="Fe-S_biosyn"/>
    <property type="match status" value="1"/>
</dbReference>
<dbReference type="SUPFAM" id="SSF89360">
    <property type="entry name" value="HesB-like domain"/>
    <property type="match status" value="1"/>
</dbReference>
<dbReference type="PROSITE" id="PS01152">
    <property type="entry name" value="HESB"/>
    <property type="match status" value="1"/>
</dbReference>
<organism>
    <name type="scientific">Francisella tularensis subsp. mediasiatica (strain FSC147)</name>
    <dbReference type="NCBI Taxonomy" id="441952"/>
    <lineage>
        <taxon>Bacteria</taxon>
        <taxon>Pseudomonadati</taxon>
        <taxon>Pseudomonadota</taxon>
        <taxon>Gammaproteobacteria</taxon>
        <taxon>Thiotrichales</taxon>
        <taxon>Francisellaceae</taxon>
        <taxon>Francisella</taxon>
    </lineage>
</organism>
<feature type="chain" id="PRO_1000144920" description="Iron-sulfur cluster insertion protein ErpA">
    <location>
        <begin position="1"/>
        <end position="116"/>
    </location>
</feature>
<feature type="binding site" evidence="1">
    <location>
        <position position="44"/>
    </location>
    <ligand>
        <name>iron-sulfur cluster</name>
        <dbReference type="ChEBI" id="CHEBI:30408"/>
    </ligand>
</feature>
<feature type="binding site" evidence="1">
    <location>
        <position position="108"/>
    </location>
    <ligand>
        <name>iron-sulfur cluster</name>
        <dbReference type="ChEBI" id="CHEBI:30408"/>
    </ligand>
</feature>
<feature type="binding site" evidence="1">
    <location>
        <position position="110"/>
    </location>
    <ligand>
        <name>iron-sulfur cluster</name>
        <dbReference type="ChEBI" id="CHEBI:30408"/>
    </ligand>
</feature>
<evidence type="ECO:0000255" key="1">
    <source>
        <dbReference type="HAMAP-Rule" id="MF_01380"/>
    </source>
</evidence>
<keyword id="KW-0408">Iron</keyword>
<keyword id="KW-0411">Iron-sulfur</keyword>
<keyword id="KW-0479">Metal-binding</keyword>
<reference key="1">
    <citation type="journal article" date="2009" name="PLoS Pathog.">
        <title>Molecular evolutionary consequences of niche restriction in Francisella tularensis, a facultative intracellular pathogen.</title>
        <authorList>
            <person name="Larsson P."/>
            <person name="Elfsmark D."/>
            <person name="Svensson K."/>
            <person name="Wikstroem P."/>
            <person name="Forsman M."/>
            <person name="Brettin T."/>
            <person name="Keim P."/>
            <person name="Johansson A."/>
        </authorList>
    </citation>
    <scope>NUCLEOTIDE SEQUENCE [LARGE SCALE GENOMIC DNA]</scope>
    <source>
        <strain>FSC147</strain>
    </source>
</reference>
<protein>
    <recommendedName>
        <fullName evidence="1">Iron-sulfur cluster insertion protein ErpA</fullName>
    </recommendedName>
</protein>
<comment type="function">
    <text evidence="1">Required for insertion of 4Fe-4S clusters for at least IspG.</text>
</comment>
<comment type="cofactor">
    <cofactor evidence="1">
        <name>iron-sulfur cluster</name>
        <dbReference type="ChEBI" id="CHEBI:30408"/>
    </cofactor>
    <text evidence="1">Binds 1 iron-sulfur cluster per subunit.</text>
</comment>
<comment type="subunit">
    <text evidence="1">Homodimer.</text>
</comment>
<comment type="similarity">
    <text evidence="1">Belongs to the HesB/IscA family.</text>
</comment>
<accession>B2SDK6</accession>
<sequence>MSEVVQSVDPINFTEAASLKVKELIEEEGDNSLSLRVYITGGGCSGFQYAFAFDNEVKEDDMVITKNGVRLLVDSMSFQYLVGADVDYKDDVEGAYFVIRNPNAKTTCGCGSSFSV</sequence>
<proteinExistence type="inferred from homology"/>